<organism>
    <name type="scientific">Shewanella baltica (strain OS155 / ATCC BAA-1091)</name>
    <dbReference type="NCBI Taxonomy" id="325240"/>
    <lineage>
        <taxon>Bacteria</taxon>
        <taxon>Pseudomonadati</taxon>
        <taxon>Pseudomonadota</taxon>
        <taxon>Gammaproteobacteria</taxon>
        <taxon>Alteromonadales</taxon>
        <taxon>Shewanellaceae</taxon>
        <taxon>Shewanella</taxon>
    </lineage>
</organism>
<feature type="chain" id="PRO_1000070852" description="Cytochrome c-type biogenesis protein CcmE">
    <location>
        <begin position="1"/>
        <end position="162"/>
    </location>
</feature>
<feature type="topological domain" description="Cytoplasmic" evidence="1">
    <location>
        <begin position="1"/>
        <end position="8"/>
    </location>
</feature>
<feature type="transmembrane region" description="Helical; Signal-anchor for type II membrane protein" evidence="1">
    <location>
        <begin position="9"/>
        <end position="29"/>
    </location>
</feature>
<feature type="topological domain" description="Periplasmic" evidence="1">
    <location>
        <begin position="30"/>
        <end position="162"/>
    </location>
</feature>
<feature type="region of interest" description="Disordered" evidence="2">
    <location>
        <begin position="142"/>
        <end position="162"/>
    </location>
</feature>
<feature type="compositionally biased region" description="Polar residues" evidence="2">
    <location>
        <begin position="153"/>
        <end position="162"/>
    </location>
</feature>
<feature type="binding site" description="covalent" evidence="1">
    <location>
        <position position="131"/>
    </location>
    <ligand>
        <name>heme</name>
        <dbReference type="ChEBI" id="CHEBI:30413"/>
    </ligand>
</feature>
<feature type="binding site" description="axial binding residue" evidence="1">
    <location>
        <position position="135"/>
    </location>
    <ligand>
        <name>heme</name>
        <dbReference type="ChEBI" id="CHEBI:30413"/>
    </ligand>
    <ligandPart>
        <name>Fe</name>
        <dbReference type="ChEBI" id="CHEBI:18248"/>
    </ligandPart>
</feature>
<comment type="function">
    <text evidence="1">Heme chaperone required for the biogenesis of c-type cytochromes. Transiently binds heme delivered by CcmC and transfers the heme to apo-cytochromes in a process facilitated by CcmF and CcmH.</text>
</comment>
<comment type="subcellular location">
    <subcellularLocation>
        <location evidence="1">Cell inner membrane</location>
        <topology evidence="1">Single-pass type II membrane protein</topology>
        <orientation evidence="1">Periplasmic side</orientation>
    </subcellularLocation>
</comment>
<comment type="similarity">
    <text evidence="1">Belongs to the CcmE/CycJ family.</text>
</comment>
<name>CCME_SHEB5</name>
<sequence>MNPRRKKRLTLAVALIGGVAAITSLLLYALNSNLNLFYTPSEIVHGKTDTGVKPEIGQRIRVGGMVTVGSMVRDPKSLHVQFAVHDSLGGEVLVTYDDLLPDLFREGQGIVAQGVLSADGKLEATEVLAKHDENYMPPEVAEAMGQKHEKLDYSQQKAPDTK</sequence>
<gene>
    <name evidence="1" type="primary">ccmE</name>
    <name evidence="1" type="synonym">cycJ</name>
    <name type="ordered locus">Sbal_0224</name>
</gene>
<dbReference type="EMBL" id="CP000563">
    <property type="protein sequence ID" value="ABN59758.1"/>
    <property type="molecule type" value="Genomic_DNA"/>
</dbReference>
<dbReference type="RefSeq" id="WP_006079699.1">
    <property type="nucleotide sequence ID" value="NC_009052.1"/>
</dbReference>
<dbReference type="SMR" id="A3CZ45"/>
<dbReference type="STRING" id="325240.Sbal_0224"/>
<dbReference type="GeneID" id="11770582"/>
<dbReference type="KEGG" id="sbl:Sbal_0224"/>
<dbReference type="HOGENOM" id="CLU_079503_1_0_6"/>
<dbReference type="OrthoDB" id="9793584at2"/>
<dbReference type="Proteomes" id="UP000001557">
    <property type="component" value="Chromosome"/>
</dbReference>
<dbReference type="GO" id="GO:0005886">
    <property type="term" value="C:plasma membrane"/>
    <property type="evidence" value="ECO:0007669"/>
    <property type="project" value="UniProtKB-SubCell"/>
</dbReference>
<dbReference type="GO" id="GO:0020037">
    <property type="term" value="F:heme binding"/>
    <property type="evidence" value="ECO:0007669"/>
    <property type="project" value="InterPro"/>
</dbReference>
<dbReference type="GO" id="GO:0046872">
    <property type="term" value="F:metal ion binding"/>
    <property type="evidence" value="ECO:0007669"/>
    <property type="project" value="UniProtKB-KW"/>
</dbReference>
<dbReference type="GO" id="GO:0017004">
    <property type="term" value="P:cytochrome complex assembly"/>
    <property type="evidence" value="ECO:0007669"/>
    <property type="project" value="UniProtKB-KW"/>
</dbReference>
<dbReference type="FunFam" id="2.40.50.140:FF:000104">
    <property type="entry name" value="Cytochrome c-type biogenesis protein CcmE"/>
    <property type="match status" value="1"/>
</dbReference>
<dbReference type="Gene3D" id="2.40.50.140">
    <property type="entry name" value="Nucleic acid-binding proteins"/>
    <property type="match status" value="1"/>
</dbReference>
<dbReference type="HAMAP" id="MF_01959">
    <property type="entry name" value="CcmE"/>
    <property type="match status" value="1"/>
</dbReference>
<dbReference type="InterPro" id="IPR004329">
    <property type="entry name" value="CcmE"/>
</dbReference>
<dbReference type="InterPro" id="IPR036127">
    <property type="entry name" value="CcmE-like_sf"/>
</dbReference>
<dbReference type="InterPro" id="IPR012340">
    <property type="entry name" value="NA-bd_OB-fold"/>
</dbReference>
<dbReference type="NCBIfam" id="NF009638">
    <property type="entry name" value="PRK13165.1"/>
    <property type="match status" value="1"/>
</dbReference>
<dbReference type="NCBIfam" id="NF009729">
    <property type="entry name" value="PRK13254.1-3"/>
    <property type="match status" value="1"/>
</dbReference>
<dbReference type="PANTHER" id="PTHR34128">
    <property type="entry name" value="CYTOCHROME C-TYPE BIOGENESIS PROTEIN CCME HOMOLOG, MITOCHONDRIAL"/>
    <property type="match status" value="1"/>
</dbReference>
<dbReference type="PANTHER" id="PTHR34128:SF2">
    <property type="entry name" value="CYTOCHROME C-TYPE BIOGENESIS PROTEIN CCME HOMOLOG, MITOCHONDRIAL"/>
    <property type="match status" value="1"/>
</dbReference>
<dbReference type="Pfam" id="PF03100">
    <property type="entry name" value="CcmE"/>
    <property type="match status" value="1"/>
</dbReference>
<dbReference type="SUPFAM" id="SSF82093">
    <property type="entry name" value="Heme chaperone CcmE"/>
    <property type="match status" value="1"/>
</dbReference>
<protein>
    <recommendedName>
        <fullName evidence="1">Cytochrome c-type biogenesis protein CcmE</fullName>
    </recommendedName>
    <alternativeName>
        <fullName evidence="1">Cytochrome c maturation protein E</fullName>
    </alternativeName>
    <alternativeName>
        <fullName evidence="1">Heme chaperone CcmE</fullName>
    </alternativeName>
</protein>
<proteinExistence type="inferred from homology"/>
<evidence type="ECO:0000255" key="1">
    <source>
        <dbReference type="HAMAP-Rule" id="MF_01959"/>
    </source>
</evidence>
<evidence type="ECO:0000256" key="2">
    <source>
        <dbReference type="SAM" id="MobiDB-lite"/>
    </source>
</evidence>
<reference key="1">
    <citation type="submission" date="2007-02" db="EMBL/GenBank/DDBJ databases">
        <title>Complete sequence of chromosome of Shewanella baltica OS155.</title>
        <authorList>
            <consortium name="US DOE Joint Genome Institute"/>
            <person name="Copeland A."/>
            <person name="Lucas S."/>
            <person name="Lapidus A."/>
            <person name="Barry K."/>
            <person name="Detter J.C."/>
            <person name="Glavina del Rio T."/>
            <person name="Hammon N."/>
            <person name="Israni S."/>
            <person name="Dalin E."/>
            <person name="Tice H."/>
            <person name="Pitluck S."/>
            <person name="Sims D.R."/>
            <person name="Brettin T."/>
            <person name="Bruce D."/>
            <person name="Han C."/>
            <person name="Tapia R."/>
            <person name="Brainard J."/>
            <person name="Schmutz J."/>
            <person name="Larimer F."/>
            <person name="Land M."/>
            <person name="Hauser L."/>
            <person name="Kyrpides N."/>
            <person name="Mikhailova N."/>
            <person name="Brettar I."/>
            <person name="Klappenbach J."/>
            <person name="Konstantinidis K."/>
            <person name="Rodrigues J."/>
            <person name="Tiedje J."/>
            <person name="Richardson P."/>
        </authorList>
    </citation>
    <scope>NUCLEOTIDE SEQUENCE [LARGE SCALE GENOMIC DNA]</scope>
    <source>
        <strain>OS155 / ATCC BAA-1091</strain>
    </source>
</reference>
<accession>A3CZ45</accession>
<keyword id="KW-0997">Cell inner membrane</keyword>
<keyword id="KW-1003">Cell membrane</keyword>
<keyword id="KW-0201">Cytochrome c-type biogenesis</keyword>
<keyword id="KW-0349">Heme</keyword>
<keyword id="KW-0408">Iron</keyword>
<keyword id="KW-0472">Membrane</keyword>
<keyword id="KW-0479">Metal-binding</keyword>
<keyword id="KW-1185">Reference proteome</keyword>
<keyword id="KW-0735">Signal-anchor</keyword>
<keyword id="KW-0812">Transmembrane</keyword>
<keyword id="KW-1133">Transmembrane helix</keyword>